<name>PYRB_BRUC2</name>
<proteinExistence type="inferred from homology"/>
<reference key="1">
    <citation type="submission" date="2007-10" db="EMBL/GenBank/DDBJ databases">
        <title>Brucella canis ATCC 23365 whole genome shotgun sequencing project.</title>
        <authorList>
            <person name="Setubal J.C."/>
            <person name="Bowns C."/>
            <person name="Boyle S."/>
            <person name="Crasta O.R."/>
            <person name="Czar M.J."/>
            <person name="Dharmanolla C."/>
            <person name="Gillespie J.J."/>
            <person name="Kenyon R.W."/>
            <person name="Lu J."/>
            <person name="Mane S."/>
            <person name="Mohapatra S."/>
            <person name="Nagrani S."/>
            <person name="Purkayastha A."/>
            <person name="Rajasimha H.K."/>
            <person name="Shallom J.M."/>
            <person name="Shallom S."/>
            <person name="Shukla M."/>
            <person name="Snyder E.E."/>
            <person name="Sobral B.W."/>
            <person name="Wattam A.R."/>
            <person name="Will R."/>
            <person name="Williams K."/>
            <person name="Yoo H."/>
            <person name="Bruce D."/>
            <person name="Detter C."/>
            <person name="Munk C."/>
            <person name="Brettin T.S."/>
        </authorList>
    </citation>
    <scope>NUCLEOTIDE SEQUENCE [LARGE SCALE GENOMIC DNA]</scope>
    <source>
        <strain>ATCC 23365 / NCTC 10854 / RM-666</strain>
    </source>
</reference>
<sequence>MTNQTVSPLFPHRHLLGIKGLSPLDILCLLDLAYQEIAVSRQPEKKKSVLRGRTQINLFFEASTRTQSSFELAGKRLGADVMNMSVGNSSVKKGETLIDTAMTLNAMQPDILVIRHASAGAAALLAQKVGCSVVNAGDGAHEHPTQALLDALTIRRAKGQIENLIVAICGDVLHSRVARSNILLLNALGARVRVVAPSTLLPAGMADMSVEVFNSMEEGLKDADVVMMLRLQRERMAGSFVPSVREYFHFYGLDREKLKFAKPDALVMHPGPMNRGVEIASDVADGPQSVIQQQVEMGVAVRMAVMEALLDPRRNPGNGEPA</sequence>
<feature type="chain" id="PRO_1000073721" description="Aspartate carbamoyltransferase catalytic subunit">
    <location>
        <begin position="1"/>
        <end position="322"/>
    </location>
</feature>
<feature type="binding site" evidence="1">
    <location>
        <position position="65"/>
    </location>
    <ligand>
        <name>carbamoyl phosphate</name>
        <dbReference type="ChEBI" id="CHEBI:58228"/>
    </ligand>
</feature>
<feature type="binding site" evidence="1">
    <location>
        <position position="66"/>
    </location>
    <ligand>
        <name>carbamoyl phosphate</name>
        <dbReference type="ChEBI" id="CHEBI:58228"/>
    </ligand>
</feature>
<feature type="binding site" evidence="1">
    <location>
        <position position="93"/>
    </location>
    <ligand>
        <name>L-aspartate</name>
        <dbReference type="ChEBI" id="CHEBI:29991"/>
    </ligand>
</feature>
<feature type="binding site" evidence="1">
    <location>
        <position position="115"/>
    </location>
    <ligand>
        <name>carbamoyl phosphate</name>
        <dbReference type="ChEBI" id="CHEBI:58228"/>
    </ligand>
</feature>
<feature type="binding site" evidence="1">
    <location>
        <position position="143"/>
    </location>
    <ligand>
        <name>carbamoyl phosphate</name>
        <dbReference type="ChEBI" id="CHEBI:58228"/>
    </ligand>
</feature>
<feature type="binding site" evidence="1">
    <location>
        <position position="146"/>
    </location>
    <ligand>
        <name>carbamoyl phosphate</name>
        <dbReference type="ChEBI" id="CHEBI:58228"/>
    </ligand>
</feature>
<feature type="binding site" evidence="1">
    <location>
        <position position="176"/>
    </location>
    <ligand>
        <name>L-aspartate</name>
        <dbReference type="ChEBI" id="CHEBI:29991"/>
    </ligand>
</feature>
<feature type="binding site" evidence="1">
    <location>
        <position position="230"/>
    </location>
    <ligand>
        <name>L-aspartate</name>
        <dbReference type="ChEBI" id="CHEBI:29991"/>
    </ligand>
</feature>
<feature type="binding site" evidence="1">
    <location>
        <position position="271"/>
    </location>
    <ligand>
        <name>carbamoyl phosphate</name>
        <dbReference type="ChEBI" id="CHEBI:58228"/>
    </ligand>
</feature>
<feature type="binding site" evidence="1">
    <location>
        <position position="272"/>
    </location>
    <ligand>
        <name>carbamoyl phosphate</name>
        <dbReference type="ChEBI" id="CHEBI:58228"/>
    </ligand>
</feature>
<organism>
    <name type="scientific">Brucella canis (strain ATCC 23365 / NCTC 10854 / RM-666)</name>
    <dbReference type="NCBI Taxonomy" id="483179"/>
    <lineage>
        <taxon>Bacteria</taxon>
        <taxon>Pseudomonadati</taxon>
        <taxon>Pseudomonadota</taxon>
        <taxon>Alphaproteobacteria</taxon>
        <taxon>Hyphomicrobiales</taxon>
        <taxon>Brucellaceae</taxon>
        <taxon>Brucella/Ochrobactrum group</taxon>
        <taxon>Brucella</taxon>
    </lineage>
</organism>
<dbReference type="EC" id="2.1.3.2" evidence="1"/>
<dbReference type="EMBL" id="CP000873">
    <property type="protein sequence ID" value="ABX63776.1"/>
    <property type="molecule type" value="Genomic_DNA"/>
</dbReference>
<dbReference type="RefSeq" id="WP_004690217.1">
    <property type="nucleotide sequence ID" value="NC_010104.1"/>
</dbReference>
<dbReference type="SMR" id="A9MBN9"/>
<dbReference type="GeneID" id="55592270"/>
<dbReference type="KEGG" id="bcs:BCAN_B0600"/>
<dbReference type="HOGENOM" id="CLU_043846_2_0_5"/>
<dbReference type="PhylomeDB" id="A9MBN9"/>
<dbReference type="UniPathway" id="UPA00070">
    <property type="reaction ID" value="UER00116"/>
</dbReference>
<dbReference type="PRO" id="PR:A9MBN9"/>
<dbReference type="Proteomes" id="UP000001385">
    <property type="component" value="Chromosome II"/>
</dbReference>
<dbReference type="GO" id="GO:0005829">
    <property type="term" value="C:cytosol"/>
    <property type="evidence" value="ECO:0007669"/>
    <property type="project" value="TreeGrafter"/>
</dbReference>
<dbReference type="GO" id="GO:0016597">
    <property type="term" value="F:amino acid binding"/>
    <property type="evidence" value="ECO:0007669"/>
    <property type="project" value="InterPro"/>
</dbReference>
<dbReference type="GO" id="GO:0004070">
    <property type="term" value="F:aspartate carbamoyltransferase activity"/>
    <property type="evidence" value="ECO:0007669"/>
    <property type="project" value="UniProtKB-UniRule"/>
</dbReference>
<dbReference type="GO" id="GO:0006207">
    <property type="term" value="P:'de novo' pyrimidine nucleobase biosynthetic process"/>
    <property type="evidence" value="ECO:0007669"/>
    <property type="project" value="InterPro"/>
</dbReference>
<dbReference type="GO" id="GO:0044205">
    <property type="term" value="P:'de novo' UMP biosynthetic process"/>
    <property type="evidence" value="ECO:0007669"/>
    <property type="project" value="UniProtKB-UniRule"/>
</dbReference>
<dbReference type="GO" id="GO:0006520">
    <property type="term" value="P:amino acid metabolic process"/>
    <property type="evidence" value="ECO:0007669"/>
    <property type="project" value="InterPro"/>
</dbReference>
<dbReference type="FunFam" id="3.40.50.1370:FF:000007">
    <property type="entry name" value="Aspartate carbamoyltransferase"/>
    <property type="match status" value="1"/>
</dbReference>
<dbReference type="Gene3D" id="3.40.50.1370">
    <property type="entry name" value="Aspartate/ornithine carbamoyltransferase"/>
    <property type="match status" value="2"/>
</dbReference>
<dbReference type="HAMAP" id="MF_00001">
    <property type="entry name" value="Asp_carb_tr"/>
    <property type="match status" value="1"/>
</dbReference>
<dbReference type="InterPro" id="IPR006132">
    <property type="entry name" value="Asp/Orn_carbamoyltranf_P-bd"/>
</dbReference>
<dbReference type="InterPro" id="IPR006130">
    <property type="entry name" value="Asp/Orn_carbamoylTrfase"/>
</dbReference>
<dbReference type="InterPro" id="IPR036901">
    <property type="entry name" value="Asp/Orn_carbamoylTrfase_sf"/>
</dbReference>
<dbReference type="InterPro" id="IPR002082">
    <property type="entry name" value="Asp_carbamoyltransf"/>
</dbReference>
<dbReference type="InterPro" id="IPR006131">
    <property type="entry name" value="Asp_carbamoyltransf_Asp/Orn-bd"/>
</dbReference>
<dbReference type="NCBIfam" id="TIGR00670">
    <property type="entry name" value="asp_carb_tr"/>
    <property type="match status" value="1"/>
</dbReference>
<dbReference type="NCBIfam" id="NF002032">
    <property type="entry name" value="PRK00856.1"/>
    <property type="match status" value="1"/>
</dbReference>
<dbReference type="PANTHER" id="PTHR45753:SF6">
    <property type="entry name" value="ASPARTATE CARBAMOYLTRANSFERASE"/>
    <property type="match status" value="1"/>
</dbReference>
<dbReference type="PANTHER" id="PTHR45753">
    <property type="entry name" value="ORNITHINE CARBAMOYLTRANSFERASE, MITOCHONDRIAL"/>
    <property type="match status" value="1"/>
</dbReference>
<dbReference type="Pfam" id="PF00185">
    <property type="entry name" value="OTCace"/>
    <property type="match status" value="1"/>
</dbReference>
<dbReference type="Pfam" id="PF02729">
    <property type="entry name" value="OTCace_N"/>
    <property type="match status" value="1"/>
</dbReference>
<dbReference type="PRINTS" id="PR00100">
    <property type="entry name" value="AOTCASE"/>
</dbReference>
<dbReference type="PRINTS" id="PR00101">
    <property type="entry name" value="ATCASE"/>
</dbReference>
<dbReference type="SUPFAM" id="SSF53671">
    <property type="entry name" value="Aspartate/ornithine carbamoyltransferase"/>
    <property type="match status" value="1"/>
</dbReference>
<dbReference type="PROSITE" id="PS00097">
    <property type="entry name" value="CARBAMOYLTRANSFERASE"/>
    <property type="match status" value="1"/>
</dbReference>
<evidence type="ECO:0000255" key="1">
    <source>
        <dbReference type="HAMAP-Rule" id="MF_00001"/>
    </source>
</evidence>
<accession>A9MBN9</accession>
<comment type="function">
    <text evidence="1">Catalyzes the condensation of carbamoyl phosphate and aspartate to form carbamoyl aspartate and inorganic phosphate, the committed step in the de novo pyrimidine nucleotide biosynthesis pathway.</text>
</comment>
<comment type="catalytic activity">
    <reaction evidence="1">
        <text>carbamoyl phosphate + L-aspartate = N-carbamoyl-L-aspartate + phosphate + H(+)</text>
        <dbReference type="Rhea" id="RHEA:20013"/>
        <dbReference type="ChEBI" id="CHEBI:15378"/>
        <dbReference type="ChEBI" id="CHEBI:29991"/>
        <dbReference type="ChEBI" id="CHEBI:32814"/>
        <dbReference type="ChEBI" id="CHEBI:43474"/>
        <dbReference type="ChEBI" id="CHEBI:58228"/>
        <dbReference type="EC" id="2.1.3.2"/>
    </reaction>
</comment>
<comment type="pathway">
    <text evidence="1">Pyrimidine metabolism; UMP biosynthesis via de novo pathway; (S)-dihydroorotate from bicarbonate: step 2/3.</text>
</comment>
<comment type="subunit">
    <text evidence="1">Heterododecamer (2C3:3R2) of six catalytic PyrB chains organized as two trimers (C3), and six regulatory PyrI chains organized as three dimers (R2).</text>
</comment>
<comment type="similarity">
    <text evidence="1">Belongs to the aspartate/ornithine carbamoyltransferase superfamily. ATCase family.</text>
</comment>
<keyword id="KW-0665">Pyrimidine biosynthesis</keyword>
<keyword id="KW-1185">Reference proteome</keyword>
<keyword id="KW-0808">Transferase</keyword>
<protein>
    <recommendedName>
        <fullName evidence="1">Aspartate carbamoyltransferase catalytic subunit</fullName>
        <ecNumber evidence="1">2.1.3.2</ecNumber>
    </recommendedName>
    <alternativeName>
        <fullName evidence="1">Aspartate transcarbamylase</fullName>
        <shortName evidence="1">ATCase</shortName>
    </alternativeName>
</protein>
<gene>
    <name evidence="1" type="primary">pyrB</name>
    <name type="ordered locus">BCAN_B0600</name>
</gene>